<feature type="chain" id="PRO_0000101811" description="Disintegrin trigramin-gamma" evidence="4">
    <location>
        <begin position="1"/>
        <end position="73"/>
    </location>
</feature>
<feature type="domain" description="Disintegrin" evidence="3">
    <location>
        <begin position="1"/>
        <end position="73"/>
    </location>
</feature>
<feature type="short sequence motif" description="Cell attachment site">
    <location>
        <begin position="51"/>
        <end position="53"/>
    </location>
</feature>
<feature type="disulfide bond" evidence="2">
    <location>
        <begin position="6"/>
        <end position="21"/>
    </location>
</feature>
<feature type="disulfide bond" evidence="2">
    <location>
        <begin position="8"/>
        <end position="16"/>
    </location>
</feature>
<feature type="disulfide bond" evidence="2">
    <location>
        <begin position="15"/>
        <end position="38"/>
    </location>
</feature>
<feature type="disulfide bond" evidence="2">
    <location>
        <begin position="29"/>
        <end position="35"/>
    </location>
</feature>
<feature type="disulfide bond" evidence="2">
    <location>
        <begin position="34"/>
        <end position="59"/>
    </location>
</feature>
<feature type="disulfide bond" evidence="2 3">
    <location>
        <begin position="47"/>
        <end position="66"/>
    </location>
</feature>
<comment type="function">
    <text evidence="4">Inhibits fibrinogen interaction with platelets. Acts by binding to alpha-IIb/beta-3 (ITGA2B/ITGB3) on the platelet surface and inhibits aggregation induced by ADP, thrombin, platelet-activating factor and collagen.</text>
</comment>
<comment type="subunit">
    <text evidence="1">Monomer (disintegrin).</text>
</comment>
<comment type="subcellular location">
    <subcellularLocation>
        <location evidence="4">Secreted</location>
    </subcellularLocation>
</comment>
<comment type="tissue specificity">
    <text evidence="7">Expressed by the venom gland.</text>
</comment>
<comment type="miscellaneous">
    <text>The disintegrin belongs to the medium disintegrin subfamily.</text>
</comment>
<comment type="similarity">
    <text evidence="6">Belongs to the venom metalloproteinase (M12B) family. P-II subfamily. P-IIa sub-subfamily.</text>
</comment>
<sequence length="73" mass="7574">EAGEDCDCGSPANPCCDAATCKLLPGAQCGEGLCCDQCSFMKKGTICRRARGDDLDDYCNGISAGCPRNPLHA</sequence>
<protein>
    <recommendedName>
        <fullName evidence="5">Disintegrin trigramin-gamma</fullName>
    </recommendedName>
    <alternativeName>
        <fullName>Platelet aggregation activation inhibitor</fullName>
    </alternativeName>
</protein>
<keyword id="KW-1217">Cell adhesion impairing toxin</keyword>
<keyword id="KW-0903">Direct protein sequencing</keyword>
<keyword id="KW-1015">Disulfide bond</keyword>
<keyword id="KW-1199">Hemostasis impairing toxin</keyword>
<keyword id="KW-1201">Platelet aggregation inhibiting toxin</keyword>
<keyword id="KW-0964">Secreted</keyword>
<keyword id="KW-0800">Toxin</keyword>
<name>VM2G_CRAGM</name>
<reference key="1">
    <citation type="journal article" date="1990" name="Proc. Natl. Acad. Sci. U.S.A.">
        <title>Platelet glycoprotein IIb-IIIa protein antagonists from snake venoms: evidence for a family of platelet-aggregation inhibitors.</title>
        <authorList>
            <person name="Dennis M.S."/>
            <person name="Henzel W.J."/>
            <person name="Pitti R.M."/>
            <person name="Lipari M.T."/>
            <person name="Napier M.A."/>
            <person name="Deisher T.A."/>
            <person name="Bunting S."/>
            <person name="Lazarus R.A."/>
        </authorList>
    </citation>
    <scope>PROTEIN SEQUENCE</scope>
    <scope>FUNCTION</scope>
    <scope>SUBCELLULAR LOCATION</scope>
    <source>
        <tissue>Venom</tissue>
    </source>
</reference>
<organism>
    <name type="scientific">Craspedocephalus gramineus</name>
    <name type="common">Bamboo pit viper</name>
    <name type="synonym">Trimeresurus gramineus</name>
    <dbReference type="NCBI Taxonomy" id="8767"/>
    <lineage>
        <taxon>Eukaryota</taxon>
        <taxon>Metazoa</taxon>
        <taxon>Chordata</taxon>
        <taxon>Craniata</taxon>
        <taxon>Vertebrata</taxon>
        <taxon>Euteleostomi</taxon>
        <taxon>Lepidosauria</taxon>
        <taxon>Squamata</taxon>
        <taxon>Bifurcata</taxon>
        <taxon>Unidentata</taxon>
        <taxon>Episquamata</taxon>
        <taxon>Toxicofera</taxon>
        <taxon>Serpentes</taxon>
        <taxon>Colubroidea</taxon>
        <taxon>Viperidae</taxon>
        <taxon>Crotalinae</taxon>
        <taxon>Craspedocephalus</taxon>
    </lineage>
</organism>
<accession>P62383</accession>
<accession>P17496</accession>
<proteinExistence type="evidence at protein level"/>
<evidence type="ECO:0000250" key="1"/>
<evidence type="ECO:0000250" key="2">
    <source>
        <dbReference type="UniProtKB" id="Q0NZX5"/>
    </source>
</evidence>
<evidence type="ECO:0000255" key="3">
    <source>
        <dbReference type="PROSITE-ProRule" id="PRU00068"/>
    </source>
</evidence>
<evidence type="ECO:0000269" key="4">
    <source>
    </source>
</evidence>
<evidence type="ECO:0000303" key="5">
    <source>
    </source>
</evidence>
<evidence type="ECO:0000305" key="6"/>
<evidence type="ECO:0000305" key="7">
    <source>
    </source>
</evidence>
<dbReference type="PIR" id="E35982">
    <property type="entry name" value="E35982"/>
</dbReference>
<dbReference type="SMR" id="P62383"/>
<dbReference type="GO" id="GO:0005576">
    <property type="term" value="C:extracellular region"/>
    <property type="evidence" value="ECO:0007669"/>
    <property type="project" value="UniProtKB-SubCell"/>
</dbReference>
<dbReference type="GO" id="GO:0090729">
    <property type="term" value="F:toxin activity"/>
    <property type="evidence" value="ECO:0007669"/>
    <property type="project" value="UniProtKB-KW"/>
</dbReference>
<dbReference type="FunFam" id="4.10.70.10:FF:000005">
    <property type="entry name" value="Zinc metalloproteinase/disintegrin"/>
    <property type="match status" value="1"/>
</dbReference>
<dbReference type="Gene3D" id="4.10.70.10">
    <property type="entry name" value="Disintegrin domain"/>
    <property type="match status" value="1"/>
</dbReference>
<dbReference type="InterPro" id="IPR018358">
    <property type="entry name" value="Disintegrin_CS"/>
</dbReference>
<dbReference type="InterPro" id="IPR001762">
    <property type="entry name" value="Disintegrin_dom"/>
</dbReference>
<dbReference type="InterPro" id="IPR036436">
    <property type="entry name" value="Disintegrin_dom_sf"/>
</dbReference>
<dbReference type="PANTHER" id="PTHR11905">
    <property type="entry name" value="ADAM A DISINTEGRIN AND METALLOPROTEASE DOMAIN"/>
    <property type="match status" value="1"/>
</dbReference>
<dbReference type="PANTHER" id="PTHR11905:SF159">
    <property type="entry name" value="ADAM METALLOPROTEASE"/>
    <property type="match status" value="1"/>
</dbReference>
<dbReference type="Pfam" id="PF00200">
    <property type="entry name" value="Disintegrin"/>
    <property type="match status" value="1"/>
</dbReference>
<dbReference type="PRINTS" id="PR00289">
    <property type="entry name" value="DISINTEGRIN"/>
</dbReference>
<dbReference type="SMART" id="SM00050">
    <property type="entry name" value="DISIN"/>
    <property type="match status" value="1"/>
</dbReference>
<dbReference type="SUPFAM" id="SSF57552">
    <property type="entry name" value="Blood coagulation inhibitor (disintegrin)"/>
    <property type="match status" value="1"/>
</dbReference>
<dbReference type="PROSITE" id="PS00427">
    <property type="entry name" value="DISINTEGRIN_1"/>
    <property type="match status" value="1"/>
</dbReference>
<dbReference type="PROSITE" id="PS50214">
    <property type="entry name" value="DISINTEGRIN_2"/>
    <property type="match status" value="1"/>
</dbReference>